<comment type="catalytic activity">
    <reaction evidence="1">
        <text>5-amino-1-(5-phospho-D-ribosyl)imidazole-4-carboxylate + L-aspartate + ATP = (2S)-2-[5-amino-1-(5-phospho-beta-D-ribosyl)imidazole-4-carboxamido]succinate + ADP + phosphate + 2 H(+)</text>
        <dbReference type="Rhea" id="RHEA:22628"/>
        <dbReference type="ChEBI" id="CHEBI:15378"/>
        <dbReference type="ChEBI" id="CHEBI:29991"/>
        <dbReference type="ChEBI" id="CHEBI:30616"/>
        <dbReference type="ChEBI" id="CHEBI:43474"/>
        <dbReference type="ChEBI" id="CHEBI:58443"/>
        <dbReference type="ChEBI" id="CHEBI:77657"/>
        <dbReference type="ChEBI" id="CHEBI:456216"/>
        <dbReference type="EC" id="6.3.2.6"/>
    </reaction>
</comment>
<comment type="pathway">
    <text evidence="1">Purine metabolism; IMP biosynthesis via de novo pathway; 5-amino-1-(5-phospho-D-ribosyl)imidazole-4-carboxamide from 5-amino-1-(5-phospho-D-ribosyl)imidazole-4-carboxylate: step 1/2.</text>
</comment>
<comment type="similarity">
    <text evidence="1">Belongs to the SAICAR synthetase family.</text>
</comment>
<accession>Q9RKL1</accession>
<evidence type="ECO:0000255" key="1">
    <source>
        <dbReference type="HAMAP-Rule" id="MF_00137"/>
    </source>
</evidence>
<proteinExistence type="inferred from homology"/>
<sequence>MSGFVEKPEPIQVPGLVHLHTGKVRELYRNEAGDLVMVASDRISAYDWVLPTEIPDKGRVLTQLSLWWFDQLADLAPNHVLSTELPPGAPADWEGRALVCKSLRMVPVECVARGYLTGSGLAEYDETRTVCGLALPEGLVDGSELPAPIFTPATKAEVGEHDENVSYEEVARQVGADTAAALRQATLAVYSRARDIARERGIVLADTKFEFGFDGDDLVLADEVLTPDSSRFWPADRWQPGRAQPSYDKQFVRDWLTSAESGWDRKSEQPPPPLPQQVVDATRAKYVEAYELLTGQSWS</sequence>
<organism>
    <name type="scientific">Streptomyces coelicolor (strain ATCC BAA-471 / A3(2) / M145)</name>
    <dbReference type="NCBI Taxonomy" id="100226"/>
    <lineage>
        <taxon>Bacteria</taxon>
        <taxon>Bacillati</taxon>
        <taxon>Actinomycetota</taxon>
        <taxon>Actinomycetes</taxon>
        <taxon>Kitasatosporales</taxon>
        <taxon>Streptomycetaceae</taxon>
        <taxon>Streptomyces</taxon>
        <taxon>Streptomyces albidoflavus group</taxon>
    </lineage>
</organism>
<protein>
    <recommendedName>
        <fullName evidence="1">Phosphoribosylaminoimidazole-succinocarboxamide synthase</fullName>
        <ecNumber evidence="1">6.3.2.6</ecNumber>
    </recommendedName>
    <alternativeName>
        <fullName evidence="1">SAICAR synthetase</fullName>
    </alternativeName>
</protein>
<reference key="1">
    <citation type="journal article" date="2002" name="Nature">
        <title>Complete genome sequence of the model actinomycete Streptomyces coelicolor A3(2).</title>
        <authorList>
            <person name="Bentley S.D."/>
            <person name="Chater K.F."/>
            <person name="Cerdeno-Tarraga A.-M."/>
            <person name="Challis G.L."/>
            <person name="Thomson N.R."/>
            <person name="James K.D."/>
            <person name="Harris D.E."/>
            <person name="Quail M.A."/>
            <person name="Kieser H."/>
            <person name="Harper D."/>
            <person name="Bateman A."/>
            <person name="Brown S."/>
            <person name="Chandra G."/>
            <person name="Chen C.W."/>
            <person name="Collins M."/>
            <person name="Cronin A."/>
            <person name="Fraser A."/>
            <person name="Goble A."/>
            <person name="Hidalgo J."/>
            <person name="Hornsby T."/>
            <person name="Howarth S."/>
            <person name="Huang C.-H."/>
            <person name="Kieser T."/>
            <person name="Larke L."/>
            <person name="Murphy L.D."/>
            <person name="Oliver K."/>
            <person name="O'Neil S."/>
            <person name="Rabbinowitsch E."/>
            <person name="Rajandream M.A."/>
            <person name="Rutherford K.M."/>
            <person name="Rutter S."/>
            <person name="Seeger K."/>
            <person name="Saunders D."/>
            <person name="Sharp S."/>
            <person name="Squares R."/>
            <person name="Squares S."/>
            <person name="Taylor K."/>
            <person name="Warren T."/>
            <person name="Wietzorrek A."/>
            <person name="Woodward J.R."/>
            <person name="Barrell B.G."/>
            <person name="Parkhill J."/>
            <person name="Hopwood D.A."/>
        </authorList>
    </citation>
    <scope>NUCLEOTIDE SEQUENCE [LARGE SCALE GENOMIC DNA]</scope>
    <source>
        <strain>ATCC BAA-471 / A3(2) / M145</strain>
    </source>
</reference>
<gene>
    <name evidence="1" type="primary">purC</name>
    <name type="ordered locus">SCO4071</name>
    <name type="ORF">SCD25.07</name>
</gene>
<feature type="chain" id="PRO_0000100880" description="Phosphoribosylaminoimidazole-succinocarboxamide synthase">
    <location>
        <begin position="1"/>
        <end position="299"/>
    </location>
</feature>
<name>PUR7_STRCO</name>
<dbReference type="EC" id="6.3.2.6" evidence="1"/>
<dbReference type="EMBL" id="AL939118">
    <property type="protein sequence ID" value="CAB56351.1"/>
    <property type="molecule type" value="Genomic_DNA"/>
</dbReference>
<dbReference type="RefSeq" id="NP_628252.1">
    <property type="nucleotide sequence ID" value="NC_003888.3"/>
</dbReference>
<dbReference type="RefSeq" id="WP_003974901.1">
    <property type="nucleotide sequence ID" value="NZ_VNID01000030.1"/>
</dbReference>
<dbReference type="SMR" id="Q9RKL1"/>
<dbReference type="FunCoup" id="Q9RKL1">
    <property type="interactions" value="327"/>
</dbReference>
<dbReference type="STRING" id="100226.gene:17761704"/>
<dbReference type="PaxDb" id="100226-SCO4071"/>
<dbReference type="KEGG" id="sco:SCO4071"/>
<dbReference type="PATRIC" id="fig|100226.15.peg.4130"/>
<dbReference type="eggNOG" id="COG0152">
    <property type="taxonomic scope" value="Bacteria"/>
</dbReference>
<dbReference type="HOGENOM" id="CLU_045637_0_0_11"/>
<dbReference type="InParanoid" id="Q9RKL1"/>
<dbReference type="OrthoDB" id="9801549at2"/>
<dbReference type="PhylomeDB" id="Q9RKL1"/>
<dbReference type="UniPathway" id="UPA00074">
    <property type="reaction ID" value="UER00131"/>
</dbReference>
<dbReference type="Proteomes" id="UP000001973">
    <property type="component" value="Chromosome"/>
</dbReference>
<dbReference type="GO" id="GO:0005524">
    <property type="term" value="F:ATP binding"/>
    <property type="evidence" value="ECO:0007669"/>
    <property type="project" value="UniProtKB-KW"/>
</dbReference>
<dbReference type="GO" id="GO:0004639">
    <property type="term" value="F:phosphoribosylaminoimidazolesuccinocarboxamide synthase activity"/>
    <property type="evidence" value="ECO:0000318"/>
    <property type="project" value="GO_Central"/>
</dbReference>
<dbReference type="GO" id="GO:0006189">
    <property type="term" value="P:'de novo' IMP biosynthetic process"/>
    <property type="evidence" value="ECO:0000318"/>
    <property type="project" value="GO_Central"/>
</dbReference>
<dbReference type="CDD" id="cd01414">
    <property type="entry name" value="SAICAR_synt_Sc"/>
    <property type="match status" value="1"/>
</dbReference>
<dbReference type="FunFam" id="3.30.200.20:FF:000199">
    <property type="entry name" value="Phosphoribosylaminoimidazole-succinocarboxamide synthase"/>
    <property type="match status" value="1"/>
</dbReference>
<dbReference type="FunFam" id="3.30.470.20:FF:000015">
    <property type="entry name" value="Phosphoribosylaminoimidazole-succinocarboxamide synthase"/>
    <property type="match status" value="1"/>
</dbReference>
<dbReference type="Gene3D" id="3.30.470.20">
    <property type="entry name" value="ATP-grasp fold, B domain"/>
    <property type="match status" value="1"/>
</dbReference>
<dbReference type="Gene3D" id="3.30.200.20">
    <property type="entry name" value="Phosphorylase Kinase, domain 1"/>
    <property type="match status" value="1"/>
</dbReference>
<dbReference type="HAMAP" id="MF_00137">
    <property type="entry name" value="SAICAR_synth"/>
    <property type="match status" value="1"/>
</dbReference>
<dbReference type="InterPro" id="IPR028923">
    <property type="entry name" value="SAICAR_synt/ADE2_N"/>
</dbReference>
<dbReference type="InterPro" id="IPR001636">
    <property type="entry name" value="SAICAR_synth"/>
</dbReference>
<dbReference type="InterPro" id="IPR018236">
    <property type="entry name" value="SAICAR_synthetase_CS"/>
</dbReference>
<dbReference type="NCBIfam" id="NF010568">
    <property type="entry name" value="PRK13961.1"/>
    <property type="match status" value="1"/>
</dbReference>
<dbReference type="NCBIfam" id="TIGR00081">
    <property type="entry name" value="purC"/>
    <property type="match status" value="1"/>
</dbReference>
<dbReference type="PANTHER" id="PTHR43700">
    <property type="entry name" value="PHOSPHORIBOSYLAMINOIMIDAZOLE-SUCCINOCARBOXAMIDE SYNTHASE"/>
    <property type="match status" value="1"/>
</dbReference>
<dbReference type="PANTHER" id="PTHR43700:SF1">
    <property type="entry name" value="PHOSPHORIBOSYLAMINOIMIDAZOLE-SUCCINOCARBOXAMIDE SYNTHASE"/>
    <property type="match status" value="1"/>
</dbReference>
<dbReference type="Pfam" id="PF01259">
    <property type="entry name" value="SAICAR_synt"/>
    <property type="match status" value="1"/>
</dbReference>
<dbReference type="SUPFAM" id="SSF56104">
    <property type="entry name" value="SAICAR synthase-like"/>
    <property type="match status" value="1"/>
</dbReference>
<dbReference type="PROSITE" id="PS01057">
    <property type="entry name" value="SAICAR_SYNTHETASE_1"/>
    <property type="match status" value="1"/>
</dbReference>
<dbReference type="PROSITE" id="PS01058">
    <property type="entry name" value="SAICAR_SYNTHETASE_2"/>
    <property type="match status" value="1"/>
</dbReference>
<keyword id="KW-0067">ATP-binding</keyword>
<keyword id="KW-0436">Ligase</keyword>
<keyword id="KW-0547">Nucleotide-binding</keyword>
<keyword id="KW-0658">Purine biosynthesis</keyword>
<keyword id="KW-1185">Reference proteome</keyword>